<comment type="function">
    <text evidence="1">Nucleotidase that shows phosphatase activity on nucleoside 5'-monophosphates.</text>
</comment>
<comment type="catalytic activity">
    <reaction>
        <text>a ribonucleoside 5'-phosphate + H2O = a ribonucleoside + phosphate</text>
        <dbReference type="Rhea" id="RHEA:12484"/>
        <dbReference type="ChEBI" id="CHEBI:15377"/>
        <dbReference type="ChEBI" id="CHEBI:18254"/>
        <dbReference type="ChEBI" id="CHEBI:43474"/>
        <dbReference type="ChEBI" id="CHEBI:58043"/>
        <dbReference type="EC" id="3.1.3.5"/>
    </reaction>
</comment>
<comment type="cofactor">
    <cofactor evidence="1">
        <name>a divalent metal cation</name>
        <dbReference type="ChEBI" id="CHEBI:60240"/>
    </cofactor>
    <text evidence="1">Binds 1 divalent metal cation per subunit.</text>
</comment>
<comment type="subcellular location">
    <subcellularLocation>
        <location evidence="2">Cytoplasm</location>
    </subcellularLocation>
</comment>
<comment type="similarity">
    <text evidence="2">Belongs to the SurE nucleotidase family.</text>
</comment>
<accession>O83434</accession>
<feature type="chain" id="PRO_0000111848" description="5'-nucleotidase SurE">
    <location>
        <begin position="1"/>
        <end position="187"/>
    </location>
</feature>
<feature type="binding site" evidence="1">
    <location>
        <position position="8"/>
    </location>
    <ligand>
        <name>a divalent metal cation</name>
        <dbReference type="ChEBI" id="CHEBI:60240"/>
    </ligand>
</feature>
<feature type="binding site" evidence="1">
    <location>
        <position position="9"/>
    </location>
    <ligand>
        <name>a divalent metal cation</name>
        <dbReference type="ChEBI" id="CHEBI:60240"/>
    </ligand>
</feature>
<feature type="binding site" evidence="1">
    <location>
        <position position="42"/>
    </location>
    <ligand>
        <name>a divalent metal cation</name>
        <dbReference type="ChEBI" id="CHEBI:60240"/>
    </ligand>
</feature>
<feature type="binding site" evidence="1">
    <location>
        <position position="95"/>
    </location>
    <ligand>
        <name>a divalent metal cation</name>
        <dbReference type="ChEBI" id="CHEBI:60240"/>
    </ligand>
</feature>
<dbReference type="EC" id="3.1.3.5"/>
<dbReference type="EMBL" id="AE000520">
    <property type="protein sequence ID" value="AAC65406.1"/>
    <property type="molecule type" value="Genomic_DNA"/>
</dbReference>
<dbReference type="PIR" id="A71328">
    <property type="entry name" value="A71328"/>
</dbReference>
<dbReference type="RefSeq" id="WP_010881867.1">
    <property type="nucleotide sequence ID" value="NC_000919.1"/>
</dbReference>
<dbReference type="SMR" id="O83434"/>
<dbReference type="IntAct" id="O83434">
    <property type="interactions" value="1"/>
</dbReference>
<dbReference type="STRING" id="243276.TP_0419"/>
<dbReference type="EnsemblBacteria" id="AAC65406">
    <property type="protein sequence ID" value="AAC65406"/>
    <property type="gene ID" value="TP_0419"/>
</dbReference>
<dbReference type="KEGG" id="tpa:TP_0419"/>
<dbReference type="eggNOG" id="COG0496">
    <property type="taxonomic scope" value="Bacteria"/>
</dbReference>
<dbReference type="HOGENOM" id="CLU_045192_3_0_12"/>
<dbReference type="Proteomes" id="UP000000811">
    <property type="component" value="Chromosome"/>
</dbReference>
<dbReference type="GO" id="GO:0005737">
    <property type="term" value="C:cytoplasm"/>
    <property type="evidence" value="ECO:0007669"/>
    <property type="project" value="UniProtKB-SubCell"/>
</dbReference>
<dbReference type="GO" id="GO:0008254">
    <property type="term" value="F:3'-nucleotidase activity"/>
    <property type="evidence" value="ECO:0007669"/>
    <property type="project" value="TreeGrafter"/>
</dbReference>
<dbReference type="GO" id="GO:0008253">
    <property type="term" value="F:5'-nucleotidase activity"/>
    <property type="evidence" value="ECO:0007669"/>
    <property type="project" value="UniProtKB-EC"/>
</dbReference>
<dbReference type="GO" id="GO:0004309">
    <property type="term" value="F:exopolyphosphatase activity"/>
    <property type="evidence" value="ECO:0007669"/>
    <property type="project" value="TreeGrafter"/>
</dbReference>
<dbReference type="GO" id="GO:0046872">
    <property type="term" value="F:metal ion binding"/>
    <property type="evidence" value="ECO:0007669"/>
    <property type="project" value="UniProtKB-KW"/>
</dbReference>
<dbReference type="GO" id="GO:0000166">
    <property type="term" value="F:nucleotide binding"/>
    <property type="evidence" value="ECO:0007669"/>
    <property type="project" value="UniProtKB-KW"/>
</dbReference>
<dbReference type="Gene3D" id="3.40.1210.10">
    <property type="entry name" value="Survival protein SurE-like phosphatase/nucleotidase"/>
    <property type="match status" value="1"/>
</dbReference>
<dbReference type="InterPro" id="IPR030048">
    <property type="entry name" value="SurE"/>
</dbReference>
<dbReference type="InterPro" id="IPR002828">
    <property type="entry name" value="SurE-like_Pase/nucleotidase"/>
</dbReference>
<dbReference type="InterPro" id="IPR036523">
    <property type="entry name" value="SurE-like_sf"/>
</dbReference>
<dbReference type="NCBIfam" id="TIGR00087">
    <property type="entry name" value="surE"/>
    <property type="match status" value="1"/>
</dbReference>
<dbReference type="PANTHER" id="PTHR30457">
    <property type="entry name" value="5'-NUCLEOTIDASE SURE"/>
    <property type="match status" value="1"/>
</dbReference>
<dbReference type="PANTHER" id="PTHR30457:SF12">
    <property type="entry name" value="5'_3'-NUCLEOTIDASE SURE"/>
    <property type="match status" value="1"/>
</dbReference>
<dbReference type="Pfam" id="PF01975">
    <property type="entry name" value="SurE"/>
    <property type="match status" value="1"/>
</dbReference>
<dbReference type="SUPFAM" id="SSF64167">
    <property type="entry name" value="SurE-like"/>
    <property type="match status" value="1"/>
</dbReference>
<proteinExistence type="inferred from homology"/>
<keyword id="KW-0963">Cytoplasm</keyword>
<keyword id="KW-0378">Hydrolase</keyword>
<keyword id="KW-0479">Metal-binding</keyword>
<keyword id="KW-0547">Nucleotide-binding</keyword>
<keyword id="KW-1185">Reference proteome</keyword>
<sequence>MRILLTNDDGYQAAGIRALHAALKAAPEGYEVTVVAPDRDRSAVSHGITTLEPVTVKEVEPGIWSCSGTPVDCVNRALRQVCVGTPPDVVVSGINEGENLGTDIVFSGTVAAARQAVMYGIAGIAASLLPVSDFGTGCRFQALARFVARHVRALAALSSEDVLVNINARSAQAYARACYARVASSDI</sequence>
<organism>
    <name type="scientific">Treponema pallidum (strain Nichols)</name>
    <dbReference type="NCBI Taxonomy" id="243276"/>
    <lineage>
        <taxon>Bacteria</taxon>
        <taxon>Pseudomonadati</taxon>
        <taxon>Spirochaetota</taxon>
        <taxon>Spirochaetia</taxon>
        <taxon>Spirochaetales</taxon>
        <taxon>Treponemataceae</taxon>
        <taxon>Treponema</taxon>
    </lineage>
</organism>
<protein>
    <recommendedName>
        <fullName>5'-nucleotidase SurE</fullName>
        <ecNumber>3.1.3.5</ecNumber>
    </recommendedName>
    <alternativeName>
        <fullName>Nucleoside 5'-monophosphate phosphohydrolase</fullName>
    </alternativeName>
</protein>
<name>SURE_TREPA</name>
<evidence type="ECO:0000250" key="1"/>
<evidence type="ECO:0000305" key="2"/>
<gene>
    <name type="primary">surE</name>
    <name type="ordered locus">TP_0419</name>
</gene>
<reference key="1">
    <citation type="journal article" date="1998" name="Science">
        <title>Complete genome sequence of Treponema pallidum, the syphilis spirochete.</title>
        <authorList>
            <person name="Fraser C.M."/>
            <person name="Norris S.J."/>
            <person name="Weinstock G.M."/>
            <person name="White O."/>
            <person name="Sutton G.G."/>
            <person name="Dodson R.J."/>
            <person name="Gwinn M.L."/>
            <person name="Hickey E.K."/>
            <person name="Clayton R.A."/>
            <person name="Ketchum K.A."/>
            <person name="Sodergren E."/>
            <person name="Hardham J.M."/>
            <person name="McLeod M.P."/>
            <person name="Salzberg S.L."/>
            <person name="Peterson J.D."/>
            <person name="Khalak H.G."/>
            <person name="Richardson D.L."/>
            <person name="Howell J.K."/>
            <person name="Chidambaram M."/>
            <person name="Utterback T.R."/>
            <person name="McDonald L.A."/>
            <person name="Artiach P."/>
            <person name="Bowman C."/>
            <person name="Cotton M.D."/>
            <person name="Fujii C."/>
            <person name="Garland S.A."/>
            <person name="Hatch B."/>
            <person name="Horst K."/>
            <person name="Roberts K.M."/>
            <person name="Sandusky M."/>
            <person name="Weidman J.F."/>
            <person name="Smith H.O."/>
            <person name="Venter J.C."/>
        </authorList>
    </citation>
    <scope>NUCLEOTIDE SEQUENCE [LARGE SCALE GENOMIC DNA]</scope>
    <source>
        <strain>Nichols</strain>
    </source>
</reference>